<dbReference type="EMBL" id="AY958086">
    <property type="protein sequence ID" value="AAX45825.1"/>
    <property type="molecule type" value="Genomic_DNA"/>
</dbReference>
<dbReference type="RefSeq" id="YP_636562.1">
    <property type="nucleotide sequence ID" value="NC_008117.1"/>
</dbReference>
<dbReference type="SMR" id="Q32RG4"/>
<dbReference type="GeneID" id="4108145"/>
<dbReference type="GO" id="GO:0009535">
    <property type="term" value="C:chloroplast thylakoid membrane"/>
    <property type="evidence" value="ECO:0007669"/>
    <property type="project" value="UniProtKB-SubCell"/>
</dbReference>
<dbReference type="GO" id="GO:0045158">
    <property type="term" value="F:electron transporter, transferring electrons within cytochrome b6/f complex of photosystem II activity"/>
    <property type="evidence" value="ECO:0007669"/>
    <property type="project" value="UniProtKB-UniRule"/>
</dbReference>
<dbReference type="GO" id="GO:0046872">
    <property type="term" value="F:metal ion binding"/>
    <property type="evidence" value="ECO:0007669"/>
    <property type="project" value="UniProtKB-KW"/>
</dbReference>
<dbReference type="GO" id="GO:0016491">
    <property type="term" value="F:oxidoreductase activity"/>
    <property type="evidence" value="ECO:0007669"/>
    <property type="project" value="InterPro"/>
</dbReference>
<dbReference type="GO" id="GO:0015979">
    <property type="term" value="P:photosynthesis"/>
    <property type="evidence" value="ECO:0007669"/>
    <property type="project" value="UniProtKB-UniRule"/>
</dbReference>
<dbReference type="GO" id="GO:0022904">
    <property type="term" value="P:respiratory electron transport chain"/>
    <property type="evidence" value="ECO:0007669"/>
    <property type="project" value="InterPro"/>
</dbReference>
<dbReference type="CDD" id="cd00284">
    <property type="entry name" value="Cytochrome_b_N"/>
    <property type="match status" value="1"/>
</dbReference>
<dbReference type="FunFam" id="1.20.810.10:FF:000001">
    <property type="entry name" value="Cytochrome b6"/>
    <property type="match status" value="1"/>
</dbReference>
<dbReference type="Gene3D" id="1.20.810.10">
    <property type="entry name" value="Cytochrome Bc1 Complex, Chain C"/>
    <property type="match status" value="1"/>
</dbReference>
<dbReference type="HAMAP" id="MF_00633">
    <property type="entry name" value="Cytb6_f_cytb6"/>
    <property type="match status" value="1"/>
</dbReference>
<dbReference type="InterPro" id="IPR005797">
    <property type="entry name" value="Cyt_b/b6_N"/>
</dbReference>
<dbReference type="InterPro" id="IPR023530">
    <property type="entry name" value="Cyt_B6_PetB"/>
</dbReference>
<dbReference type="InterPro" id="IPR027387">
    <property type="entry name" value="Cytb/b6-like_sf"/>
</dbReference>
<dbReference type="InterPro" id="IPR048259">
    <property type="entry name" value="Cytochrome_b_N_euk/bac"/>
</dbReference>
<dbReference type="InterPro" id="IPR016174">
    <property type="entry name" value="Di-haem_cyt_TM"/>
</dbReference>
<dbReference type="NCBIfam" id="NF002990">
    <property type="entry name" value="PRK03735.1"/>
    <property type="match status" value="1"/>
</dbReference>
<dbReference type="PANTHER" id="PTHR19271">
    <property type="entry name" value="CYTOCHROME B"/>
    <property type="match status" value="1"/>
</dbReference>
<dbReference type="PANTHER" id="PTHR19271:SF16">
    <property type="entry name" value="CYTOCHROME B"/>
    <property type="match status" value="1"/>
</dbReference>
<dbReference type="Pfam" id="PF00033">
    <property type="entry name" value="Cytochrome_B"/>
    <property type="match status" value="1"/>
</dbReference>
<dbReference type="PIRSF" id="PIRSF000032">
    <property type="entry name" value="Cytochrome_b6"/>
    <property type="match status" value="1"/>
</dbReference>
<dbReference type="SUPFAM" id="SSF81342">
    <property type="entry name" value="Transmembrane di-heme cytochromes"/>
    <property type="match status" value="1"/>
</dbReference>
<dbReference type="PROSITE" id="PS51002">
    <property type="entry name" value="CYTB_NTER"/>
    <property type="match status" value="1"/>
</dbReference>
<feature type="chain" id="PRO_0000275341" description="Cytochrome b6">
    <location>
        <begin position="1"/>
        <end position="215"/>
    </location>
</feature>
<feature type="transmembrane region" description="Helical" evidence="1">
    <location>
        <begin position="32"/>
        <end position="52"/>
    </location>
</feature>
<feature type="transmembrane region" description="Helical" evidence="1">
    <location>
        <begin position="90"/>
        <end position="110"/>
    </location>
</feature>
<feature type="transmembrane region" description="Helical" evidence="1">
    <location>
        <begin position="116"/>
        <end position="136"/>
    </location>
</feature>
<feature type="transmembrane region" description="Helical" evidence="1">
    <location>
        <begin position="186"/>
        <end position="206"/>
    </location>
</feature>
<feature type="binding site" description="covalent" evidence="1">
    <location>
        <position position="35"/>
    </location>
    <ligand>
        <name>heme c</name>
        <dbReference type="ChEBI" id="CHEBI:61717"/>
    </ligand>
</feature>
<feature type="binding site" description="axial binding residue" evidence="1">
    <location>
        <position position="86"/>
    </location>
    <ligand>
        <name>heme b</name>
        <dbReference type="ChEBI" id="CHEBI:60344"/>
        <label>2</label>
    </ligand>
    <ligandPart>
        <name>Fe</name>
        <dbReference type="ChEBI" id="CHEBI:18248"/>
    </ligandPart>
</feature>
<feature type="binding site" description="axial binding residue" evidence="1">
    <location>
        <position position="100"/>
    </location>
    <ligand>
        <name>heme b</name>
        <dbReference type="ChEBI" id="CHEBI:60344"/>
        <label>1</label>
    </ligand>
    <ligandPart>
        <name>Fe</name>
        <dbReference type="ChEBI" id="CHEBI:18248"/>
    </ligandPart>
</feature>
<feature type="binding site" description="axial binding residue" evidence="1">
    <location>
        <position position="187"/>
    </location>
    <ligand>
        <name>heme b</name>
        <dbReference type="ChEBI" id="CHEBI:60344"/>
        <label>2</label>
    </ligand>
    <ligandPart>
        <name>Fe</name>
        <dbReference type="ChEBI" id="CHEBI:18248"/>
    </ligandPart>
</feature>
<feature type="binding site" description="axial binding residue" evidence="1">
    <location>
        <position position="202"/>
    </location>
    <ligand>
        <name>heme b</name>
        <dbReference type="ChEBI" id="CHEBI:60344"/>
        <label>1</label>
    </ligand>
    <ligandPart>
        <name>Fe</name>
        <dbReference type="ChEBI" id="CHEBI:18248"/>
    </ligandPart>
</feature>
<reference key="1">
    <citation type="journal article" date="2005" name="BMC Biol.">
        <title>The complete chloroplast DNA sequences of the charophycean green algae Staurastrum and Zygnema reveal that the chloroplast genome underwent extensive changes during the evolution of the Zygnematales.</title>
        <authorList>
            <person name="Turmel M."/>
            <person name="Otis C."/>
            <person name="Lemieux C."/>
        </authorList>
    </citation>
    <scope>NUCLEOTIDE SEQUENCE [LARGE SCALE GENOMIC DNA]</scope>
</reference>
<organism>
    <name type="scientific">Zygnema circumcarinatum</name>
    <name type="common">Green alga</name>
    <dbReference type="NCBI Taxonomy" id="35869"/>
    <lineage>
        <taxon>Eukaryota</taxon>
        <taxon>Viridiplantae</taxon>
        <taxon>Streptophyta</taxon>
        <taxon>Zygnematophyceae</taxon>
        <taxon>Zygnematophycidae</taxon>
        <taxon>Zygnematales</taxon>
        <taxon>Zygnemataceae</taxon>
        <taxon>Zygnema</taxon>
    </lineage>
</organism>
<geneLocation type="chloroplast"/>
<name>CYB6_ZYGCR</name>
<accession>Q32RG4</accession>
<proteinExistence type="inferred from homology"/>
<comment type="function">
    <text evidence="1">Component of the cytochrome b6-f complex, which mediates electron transfer between photosystem II (PSII) and photosystem I (PSI), cyclic electron flow around PSI, and state transitions.</text>
</comment>
<comment type="cofactor">
    <cofactor evidence="1">
        <name>heme b</name>
        <dbReference type="ChEBI" id="CHEBI:60344"/>
    </cofactor>
    <text evidence="1">Binds 2 heme b groups non-covalently with two histidine residues as axial ligands.</text>
</comment>
<comment type="cofactor">
    <cofactor evidence="1">
        <name>heme c</name>
        <dbReference type="ChEBI" id="CHEBI:61717"/>
    </cofactor>
    <text evidence="1">Binds one heme group covalently by a single cysteine link with no axial amino acid ligand. This heme was named heme ci.</text>
</comment>
<comment type="subunit">
    <text evidence="1">The 4 large subunits of the cytochrome b6-f complex are cytochrome b6, subunit IV (17 kDa polypeptide, PetD), cytochrome f and the Rieske protein, while the 4 small subunits are PetG, PetL, PetM and PetN. The complex functions as a dimer.</text>
</comment>
<comment type="subcellular location">
    <subcellularLocation>
        <location evidence="1">Plastid</location>
        <location evidence="1">Chloroplast thylakoid membrane</location>
        <topology evidence="1">Multi-pass membrane protein</topology>
    </subcellularLocation>
</comment>
<comment type="miscellaneous">
    <text evidence="1">Heme 1 (or BH or b566) is high-potential and absorbs at about 566 nm, and heme 2 (or BL or b562) is low-potential and absorbs at about 562 nm.</text>
</comment>
<comment type="similarity">
    <text evidence="1">Belongs to the cytochrome b family. PetB subfamily.</text>
</comment>
<gene>
    <name evidence="1" type="primary">petB</name>
</gene>
<keyword id="KW-0150">Chloroplast</keyword>
<keyword id="KW-0249">Electron transport</keyword>
<keyword id="KW-0349">Heme</keyword>
<keyword id="KW-0408">Iron</keyword>
<keyword id="KW-0472">Membrane</keyword>
<keyword id="KW-0479">Metal-binding</keyword>
<keyword id="KW-0602">Photosynthesis</keyword>
<keyword id="KW-0934">Plastid</keyword>
<keyword id="KW-0793">Thylakoid</keyword>
<keyword id="KW-0812">Transmembrane</keyword>
<keyword id="KW-1133">Transmembrane helix</keyword>
<keyword id="KW-0813">Transport</keyword>
<protein>
    <recommendedName>
        <fullName evidence="1">Cytochrome b6</fullName>
    </recommendedName>
</protein>
<evidence type="ECO:0000255" key="1">
    <source>
        <dbReference type="HAMAP-Rule" id="MF_00633"/>
    </source>
</evidence>
<sequence length="215" mass="24237">MGKVYDWFEERLEIQSIADDITSKYVPPHVNIFYCLGGITLTCFIIQVATGFAMTFYYRPTVTEAFASVQYIMTDVNFGWLIRSVHRWSASMMVLMMILHVFRVYLTGGFKKPRELTWVTGVILGVLTVSFGVTGYSLPWDQIGYWAVKIVTGVPDAIPVVGSPIVELLRGSVSVGQTTLTRFYSLHTFVLPLLTAVFMLMHFLMIRKQGISGPL</sequence>